<proteinExistence type="inferred from homology"/>
<gene>
    <name evidence="2" type="primary">atpD</name>
    <name type="ordered locus">Z5230</name>
    <name type="ordered locus">ECs4674</name>
</gene>
<keyword id="KW-0066">ATP synthesis</keyword>
<keyword id="KW-0067">ATP-binding</keyword>
<keyword id="KW-0997">Cell inner membrane</keyword>
<keyword id="KW-1003">Cell membrane</keyword>
<keyword id="KW-0139">CF(1)</keyword>
<keyword id="KW-0375">Hydrogen ion transport</keyword>
<keyword id="KW-0406">Ion transport</keyword>
<keyword id="KW-0472">Membrane</keyword>
<keyword id="KW-0547">Nucleotide-binding</keyword>
<keyword id="KW-1185">Reference proteome</keyword>
<keyword id="KW-1278">Translocase</keyword>
<keyword id="KW-0813">Transport</keyword>
<reference key="1">
    <citation type="journal article" date="2001" name="Nature">
        <title>Genome sequence of enterohaemorrhagic Escherichia coli O157:H7.</title>
        <authorList>
            <person name="Perna N.T."/>
            <person name="Plunkett G. III"/>
            <person name="Burland V."/>
            <person name="Mau B."/>
            <person name="Glasner J.D."/>
            <person name="Rose D.J."/>
            <person name="Mayhew G.F."/>
            <person name="Evans P.S."/>
            <person name="Gregor J."/>
            <person name="Kirkpatrick H.A."/>
            <person name="Posfai G."/>
            <person name="Hackett J."/>
            <person name="Klink S."/>
            <person name="Boutin A."/>
            <person name="Shao Y."/>
            <person name="Miller L."/>
            <person name="Grotbeck E.J."/>
            <person name="Davis N.W."/>
            <person name="Lim A."/>
            <person name="Dimalanta E.T."/>
            <person name="Potamousis K."/>
            <person name="Apodaca J."/>
            <person name="Anantharaman T.S."/>
            <person name="Lin J."/>
            <person name="Yen G."/>
            <person name="Schwartz D.C."/>
            <person name="Welch R.A."/>
            <person name="Blattner F.R."/>
        </authorList>
    </citation>
    <scope>NUCLEOTIDE SEQUENCE [LARGE SCALE GENOMIC DNA]</scope>
    <source>
        <strain>O157:H7 / EDL933 / ATCC 700927 / EHEC</strain>
    </source>
</reference>
<reference key="2">
    <citation type="journal article" date="2001" name="DNA Res.">
        <title>Complete genome sequence of enterohemorrhagic Escherichia coli O157:H7 and genomic comparison with a laboratory strain K-12.</title>
        <authorList>
            <person name="Hayashi T."/>
            <person name="Makino K."/>
            <person name="Ohnishi M."/>
            <person name="Kurokawa K."/>
            <person name="Ishii K."/>
            <person name="Yokoyama K."/>
            <person name="Han C.-G."/>
            <person name="Ohtsubo E."/>
            <person name="Nakayama K."/>
            <person name="Murata T."/>
            <person name="Tanaka M."/>
            <person name="Tobe T."/>
            <person name="Iida T."/>
            <person name="Takami H."/>
            <person name="Honda T."/>
            <person name="Sasakawa C."/>
            <person name="Ogasawara N."/>
            <person name="Yasunaga T."/>
            <person name="Kuhara S."/>
            <person name="Shiba T."/>
            <person name="Hattori M."/>
            <person name="Shinagawa H."/>
        </authorList>
    </citation>
    <scope>NUCLEOTIDE SEQUENCE [LARGE SCALE GENOMIC DNA]</scope>
    <source>
        <strain>O157:H7 / Sakai / RIMD 0509952 / EHEC</strain>
    </source>
</reference>
<accession>P0ABB6</accession>
<accession>P00824</accession>
<name>ATPB_ECO57</name>
<protein>
    <recommendedName>
        <fullName evidence="2">ATP synthase subunit beta</fullName>
        <ecNumber evidence="2">7.1.2.2</ecNumber>
    </recommendedName>
    <alternativeName>
        <fullName evidence="2">ATP synthase F1 sector subunit beta</fullName>
    </alternativeName>
    <alternativeName>
        <fullName evidence="2">F-ATPase subunit beta</fullName>
    </alternativeName>
</protein>
<sequence>MATGKIVQVIGAVVDVEFPQDAVPRVYDALEVQNGNERLVLEVQQQLGGGIVRTIAMGSSDGLRRGLDVKDLEHPIEVPVGKATLGRIMNVLGEPVDMKGEIGEEERWAIHRAAPSYEELSNSQELLETGIKVIDLMCPFAKGGKVGLFGGAGVGKTVNMMELIRNIAIEHSGYSVFAGVGERTREGNDFYHEMTDSNVIDKVSLVYGQMNEPPGNRLRVALTGLTMAEKFRDEGRDVLLFVDNIYRYTLAGTEVSALLGRMPSAVGYQPTLAEEMGVLQERITSTKTGSITSVQAVYVPADDLTDPSPATTFAHLDATVVLSRQIASLGIYPAVDPLDSTSRQLDPLVVGQEHYDTARGVQSILQRYQELKDIIAILGMDELSEEDKLVVARARKIQRFLSQPFFVAEVFTGSPGKYVSLKDTIRGFKGIMEGEYDHLPEQAFYMVGSIEEAVEKAKKL</sequence>
<comment type="function">
    <text evidence="2">Produces ATP from ADP in the presence of a proton gradient across the membrane. The catalytic sites are hosted primarily by the beta subunits.</text>
</comment>
<comment type="catalytic activity">
    <reaction evidence="2">
        <text>ATP + H2O + 4 H(+)(in) = ADP + phosphate + 5 H(+)(out)</text>
        <dbReference type="Rhea" id="RHEA:57720"/>
        <dbReference type="ChEBI" id="CHEBI:15377"/>
        <dbReference type="ChEBI" id="CHEBI:15378"/>
        <dbReference type="ChEBI" id="CHEBI:30616"/>
        <dbReference type="ChEBI" id="CHEBI:43474"/>
        <dbReference type="ChEBI" id="CHEBI:456216"/>
        <dbReference type="EC" id="7.1.2.2"/>
    </reaction>
</comment>
<comment type="subunit">
    <text evidence="2">F-type ATPases have 2 components, CF(1) - the catalytic core - and CF(0) - the membrane proton channel. CF(1) has five subunits: alpha(3), beta(3), gamma(1), delta(1), epsilon(1). CF(0) has three main subunits: a(1), b(2) and c(9-12). The alpha and beta chains form an alternating ring which encloses part of the gamma chain. CF(1) is attached to CF(0) by a central stalk formed by the gamma and epsilon chains, while a peripheral stalk is formed by the delta and b chains.</text>
</comment>
<comment type="subcellular location">
    <subcellularLocation>
        <location evidence="2">Cell inner membrane</location>
        <topology evidence="2">Peripheral membrane protein</topology>
    </subcellularLocation>
</comment>
<comment type="similarity">
    <text evidence="2">Belongs to the ATPase alpha/beta chains family.</text>
</comment>
<feature type="initiator methionine" description="Removed" evidence="1">
    <location>
        <position position="1"/>
    </location>
</feature>
<feature type="chain" id="PRO_0000144438" description="ATP synthase subunit beta">
    <location>
        <begin position="2"/>
        <end position="460"/>
    </location>
</feature>
<feature type="binding site" evidence="2">
    <location>
        <begin position="150"/>
        <end position="157"/>
    </location>
    <ligand>
        <name>ATP</name>
        <dbReference type="ChEBI" id="CHEBI:30616"/>
    </ligand>
</feature>
<dbReference type="EC" id="7.1.2.2" evidence="2"/>
<dbReference type="EMBL" id="AE005174">
    <property type="protein sequence ID" value="AAG58935.1"/>
    <property type="molecule type" value="Genomic_DNA"/>
</dbReference>
<dbReference type="EMBL" id="BA000007">
    <property type="protein sequence ID" value="BAB38097.1"/>
    <property type="molecule type" value="Genomic_DNA"/>
</dbReference>
<dbReference type="PIR" id="B91213">
    <property type="entry name" value="B91213"/>
</dbReference>
<dbReference type="PIR" id="C86059">
    <property type="entry name" value="C86059"/>
</dbReference>
<dbReference type="RefSeq" id="NP_312701.1">
    <property type="nucleotide sequence ID" value="NC_002695.1"/>
</dbReference>
<dbReference type="RefSeq" id="WP_000190506.1">
    <property type="nucleotide sequence ID" value="NZ_VOAI01000011.1"/>
</dbReference>
<dbReference type="SMR" id="P0ABB6"/>
<dbReference type="STRING" id="155864.Z5230"/>
<dbReference type="GeneID" id="915359"/>
<dbReference type="GeneID" id="93778235"/>
<dbReference type="KEGG" id="ece:Z5230"/>
<dbReference type="KEGG" id="ecs:ECs_4674"/>
<dbReference type="PATRIC" id="fig|386585.9.peg.4879"/>
<dbReference type="eggNOG" id="COG0055">
    <property type="taxonomic scope" value="Bacteria"/>
</dbReference>
<dbReference type="HOGENOM" id="CLU_022398_0_2_6"/>
<dbReference type="OMA" id="SMEEGGW"/>
<dbReference type="Proteomes" id="UP000000558">
    <property type="component" value="Chromosome"/>
</dbReference>
<dbReference type="Proteomes" id="UP000002519">
    <property type="component" value="Chromosome"/>
</dbReference>
<dbReference type="GO" id="GO:0005886">
    <property type="term" value="C:plasma membrane"/>
    <property type="evidence" value="ECO:0007669"/>
    <property type="project" value="UniProtKB-SubCell"/>
</dbReference>
<dbReference type="GO" id="GO:0045259">
    <property type="term" value="C:proton-transporting ATP synthase complex"/>
    <property type="evidence" value="ECO:0007669"/>
    <property type="project" value="UniProtKB-KW"/>
</dbReference>
<dbReference type="GO" id="GO:0005524">
    <property type="term" value="F:ATP binding"/>
    <property type="evidence" value="ECO:0007669"/>
    <property type="project" value="UniProtKB-UniRule"/>
</dbReference>
<dbReference type="GO" id="GO:0016887">
    <property type="term" value="F:ATP hydrolysis activity"/>
    <property type="evidence" value="ECO:0007669"/>
    <property type="project" value="InterPro"/>
</dbReference>
<dbReference type="GO" id="GO:0046933">
    <property type="term" value="F:proton-transporting ATP synthase activity, rotational mechanism"/>
    <property type="evidence" value="ECO:0007669"/>
    <property type="project" value="UniProtKB-UniRule"/>
</dbReference>
<dbReference type="CDD" id="cd18110">
    <property type="entry name" value="ATP-synt_F1_beta_C"/>
    <property type="match status" value="1"/>
</dbReference>
<dbReference type="CDD" id="cd18115">
    <property type="entry name" value="ATP-synt_F1_beta_N"/>
    <property type="match status" value="1"/>
</dbReference>
<dbReference type="CDD" id="cd01133">
    <property type="entry name" value="F1-ATPase_beta_CD"/>
    <property type="match status" value="1"/>
</dbReference>
<dbReference type="FunFam" id="1.10.1140.10:FF:000001">
    <property type="entry name" value="ATP synthase subunit beta"/>
    <property type="match status" value="1"/>
</dbReference>
<dbReference type="FunFam" id="2.40.10.170:FF:000003">
    <property type="entry name" value="ATP synthase subunit beta"/>
    <property type="match status" value="1"/>
</dbReference>
<dbReference type="FunFam" id="3.40.50.300:FF:000004">
    <property type="entry name" value="ATP synthase subunit beta"/>
    <property type="match status" value="1"/>
</dbReference>
<dbReference type="Gene3D" id="2.40.10.170">
    <property type="match status" value="1"/>
</dbReference>
<dbReference type="Gene3D" id="1.10.1140.10">
    <property type="entry name" value="Bovine Mitochondrial F1-atpase, Atp Synthase Beta Chain, Chain D, domain 3"/>
    <property type="match status" value="1"/>
</dbReference>
<dbReference type="Gene3D" id="3.40.50.300">
    <property type="entry name" value="P-loop containing nucleotide triphosphate hydrolases"/>
    <property type="match status" value="1"/>
</dbReference>
<dbReference type="HAMAP" id="MF_01347">
    <property type="entry name" value="ATP_synth_beta_bact"/>
    <property type="match status" value="1"/>
</dbReference>
<dbReference type="InterPro" id="IPR003593">
    <property type="entry name" value="AAA+_ATPase"/>
</dbReference>
<dbReference type="InterPro" id="IPR055190">
    <property type="entry name" value="ATP-synt_VA_C"/>
</dbReference>
<dbReference type="InterPro" id="IPR005722">
    <property type="entry name" value="ATP_synth_F1_bsu"/>
</dbReference>
<dbReference type="InterPro" id="IPR020003">
    <property type="entry name" value="ATPase_a/bsu_AS"/>
</dbReference>
<dbReference type="InterPro" id="IPR050053">
    <property type="entry name" value="ATPase_alpha/beta_chains"/>
</dbReference>
<dbReference type="InterPro" id="IPR004100">
    <property type="entry name" value="ATPase_F1/V1/A1_a/bsu_N"/>
</dbReference>
<dbReference type="InterPro" id="IPR036121">
    <property type="entry name" value="ATPase_F1/V1/A1_a/bsu_N_sf"/>
</dbReference>
<dbReference type="InterPro" id="IPR000194">
    <property type="entry name" value="ATPase_F1/V1/A1_a/bsu_nucl-bd"/>
</dbReference>
<dbReference type="InterPro" id="IPR024034">
    <property type="entry name" value="ATPase_F1/V1_b/a_C"/>
</dbReference>
<dbReference type="InterPro" id="IPR027417">
    <property type="entry name" value="P-loop_NTPase"/>
</dbReference>
<dbReference type="NCBIfam" id="TIGR01039">
    <property type="entry name" value="atpD"/>
    <property type="match status" value="1"/>
</dbReference>
<dbReference type="PANTHER" id="PTHR15184">
    <property type="entry name" value="ATP SYNTHASE"/>
    <property type="match status" value="1"/>
</dbReference>
<dbReference type="PANTHER" id="PTHR15184:SF71">
    <property type="entry name" value="ATP SYNTHASE SUBUNIT BETA, MITOCHONDRIAL"/>
    <property type="match status" value="1"/>
</dbReference>
<dbReference type="Pfam" id="PF00006">
    <property type="entry name" value="ATP-synt_ab"/>
    <property type="match status" value="1"/>
</dbReference>
<dbReference type="Pfam" id="PF02874">
    <property type="entry name" value="ATP-synt_ab_N"/>
    <property type="match status" value="1"/>
</dbReference>
<dbReference type="Pfam" id="PF22919">
    <property type="entry name" value="ATP-synt_VA_C"/>
    <property type="match status" value="1"/>
</dbReference>
<dbReference type="SMART" id="SM00382">
    <property type="entry name" value="AAA"/>
    <property type="match status" value="1"/>
</dbReference>
<dbReference type="SUPFAM" id="SSF47917">
    <property type="entry name" value="C-terminal domain of alpha and beta subunits of F1 ATP synthase"/>
    <property type="match status" value="1"/>
</dbReference>
<dbReference type="SUPFAM" id="SSF50615">
    <property type="entry name" value="N-terminal domain of alpha and beta subunits of F1 ATP synthase"/>
    <property type="match status" value="1"/>
</dbReference>
<dbReference type="SUPFAM" id="SSF52540">
    <property type="entry name" value="P-loop containing nucleoside triphosphate hydrolases"/>
    <property type="match status" value="1"/>
</dbReference>
<dbReference type="PROSITE" id="PS00152">
    <property type="entry name" value="ATPASE_ALPHA_BETA"/>
    <property type="match status" value="1"/>
</dbReference>
<evidence type="ECO:0000250" key="1"/>
<evidence type="ECO:0000255" key="2">
    <source>
        <dbReference type="HAMAP-Rule" id="MF_01347"/>
    </source>
</evidence>
<organism>
    <name type="scientific">Escherichia coli O157:H7</name>
    <dbReference type="NCBI Taxonomy" id="83334"/>
    <lineage>
        <taxon>Bacteria</taxon>
        <taxon>Pseudomonadati</taxon>
        <taxon>Pseudomonadota</taxon>
        <taxon>Gammaproteobacteria</taxon>
        <taxon>Enterobacterales</taxon>
        <taxon>Enterobacteriaceae</taxon>
        <taxon>Escherichia</taxon>
    </lineage>
</organism>